<feature type="chain" id="PRO_0000452836" description="Carboxylic acid reductase">
    <location>
        <begin position="1"/>
        <end position="1188"/>
    </location>
</feature>
<feature type="domain" description="Carrier" evidence="2">
    <location>
        <begin position="665"/>
        <end position="743"/>
    </location>
</feature>
<feature type="binding site" evidence="2 3 10">
    <location>
        <position position="315"/>
    </location>
    <ligand>
        <name>AMP</name>
        <dbReference type="ChEBI" id="CHEBI:456215"/>
    </ligand>
</feature>
<feature type="binding site" evidence="2 3 9 10 12">
    <location>
        <position position="408"/>
    </location>
    <ligand>
        <name>AMP</name>
        <dbReference type="ChEBI" id="CHEBI:456215"/>
    </ligand>
</feature>
<feature type="binding site" evidence="2 3 9 10 12">
    <location>
        <begin position="429"/>
        <end position="430"/>
    </location>
    <ligand>
        <name>AMP</name>
        <dbReference type="ChEBI" id="CHEBI:456215"/>
    </ligand>
</feature>
<feature type="binding site" evidence="2 3 9 10 12">
    <location>
        <position position="434"/>
    </location>
    <ligand>
        <name>AMP</name>
        <dbReference type="ChEBI" id="CHEBI:456215"/>
    </ligand>
</feature>
<feature type="binding site" evidence="2 3 9 10 12">
    <location>
        <position position="507"/>
    </location>
    <ligand>
        <name>AMP</name>
        <dbReference type="ChEBI" id="CHEBI:456215"/>
    </ligand>
</feature>
<feature type="binding site" evidence="2 3 10 12">
    <location>
        <begin position="519"/>
        <end position="522"/>
    </location>
    <ligand>
        <name>AMP</name>
        <dbReference type="ChEBI" id="CHEBI:456215"/>
    </ligand>
</feature>
<feature type="binding site" evidence="2 3 9">
    <location>
        <position position="528"/>
    </location>
    <ligand>
        <name>AMP</name>
        <dbReference type="ChEBI" id="CHEBI:456215"/>
    </ligand>
</feature>
<feature type="binding site" evidence="2 3 10 12">
    <location>
        <position position="629"/>
    </location>
    <ligand>
        <name>AMP</name>
        <dbReference type="ChEBI" id="CHEBI:456215"/>
    </ligand>
</feature>
<feature type="binding site" evidence="2 3 7 8 11">
    <location>
        <begin position="801"/>
        <end position="804"/>
    </location>
    <ligand>
        <name>NADP(+)</name>
        <dbReference type="ChEBI" id="CHEBI:58349"/>
    </ligand>
</feature>
<feature type="binding site" evidence="2 3 7 8 11">
    <location>
        <position position="828"/>
    </location>
    <ligand>
        <name>NADP(+)</name>
        <dbReference type="ChEBI" id="CHEBI:58349"/>
    </ligand>
</feature>
<feature type="binding site" evidence="2 3 7 8 11">
    <location>
        <position position="838"/>
    </location>
    <ligand>
        <name>NADP(+)</name>
        <dbReference type="ChEBI" id="CHEBI:58349"/>
    </ligand>
</feature>
<feature type="binding site" evidence="2 3 7 8 11">
    <location>
        <begin position="868"/>
        <end position="869"/>
    </location>
    <ligand>
        <name>NADP(+)</name>
        <dbReference type="ChEBI" id="CHEBI:58349"/>
    </ligand>
</feature>
<feature type="binding site" evidence="2 3 7 8 11">
    <location>
        <begin position="894"/>
        <end position="896"/>
    </location>
    <ligand>
        <name>NADP(+)</name>
        <dbReference type="ChEBI" id="CHEBI:58349"/>
    </ligand>
</feature>
<feature type="binding site" evidence="2 3 7 8 11">
    <location>
        <position position="934"/>
    </location>
    <ligand>
        <name>NADP(+)</name>
        <dbReference type="ChEBI" id="CHEBI:58349"/>
    </ligand>
</feature>
<feature type="binding site" evidence="2 3 7 8 11">
    <location>
        <position position="970"/>
    </location>
    <ligand>
        <name>NADP(+)</name>
        <dbReference type="ChEBI" id="CHEBI:58349"/>
    </ligand>
</feature>
<feature type="binding site" evidence="2 3 8 11">
    <location>
        <position position="974"/>
    </location>
    <ligand>
        <name>NADP(+)</name>
        <dbReference type="ChEBI" id="CHEBI:58349"/>
    </ligand>
</feature>
<feature type="binding site" evidence="2 3 7 8 11">
    <location>
        <position position="997"/>
    </location>
    <ligand>
        <name>NADP(+)</name>
        <dbReference type="ChEBI" id="CHEBI:58349"/>
    </ligand>
</feature>
<feature type="modified residue" description="O-(pantetheine 4'-phosphoryl)serine" evidence="2 3 11">
    <location>
        <position position="702"/>
    </location>
</feature>
<feature type="mutagenesis site" description="Loss of activity." evidence="3">
    <original>H</original>
    <variation>P</variation>
    <variation>N</variation>
    <location>
        <position position="900"/>
    </location>
</feature>
<feature type="mutagenesis site" description="Loss of activity." evidence="3">
    <original>Y</original>
    <variation>P</variation>
    <location>
        <position position="966"/>
    </location>
</feature>
<feature type="mutagenesis site" description="Does not affect benzoic acid reduction rates but leads to alcohol production. Displays modest benzaldehyde reductase activity." evidence="3">
    <original>D</original>
    <variation>G</variation>
    <location>
        <position position="998"/>
    </location>
</feature>
<feature type="mutagenesis site" description="Loss of activity." evidence="3">
    <original>Q</original>
    <variation>P</variation>
    <location>
        <position position="1015"/>
    </location>
</feature>
<feature type="mutagenesis site" description="Loss of activity." evidence="3">
    <original>R</original>
    <variation>A</variation>
    <location>
        <position position="1018"/>
    </location>
</feature>
<feature type="mutagenesis site" description="Loss of activity." evidence="3">
    <original>L</original>
    <variation>Y</variation>
    <location>
        <position position="1131"/>
    </location>
</feature>
<feature type="helix" evidence="14">
    <location>
        <begin position="19"/>
        <end position="29"/>
    </location>
</feature>
<feature type="helix" evidence="14">
    <location>
        <begin position="31"/>
        <end position="35"/>
    </location>
</feature>
<feature type="helix" evidence="14">
    <location>
        <begin position="40"/>
        <end position="46"/>
    </location>
</feature>
<feature type="helix" evidence="14">
    <location>
        <begin position="53"/>
        <end position="63"/>
    </location>
</feature>
<feature type="turn" evidence="14">
    <location>
        <begin position="64"/>
        <end position="66"/>
    </location>
</feature>
<feature type="strand" evidence="14">
    <location>
        <begin position="67"/>
        <end position="79"/>
    </location>
</feature>
<feature type="turn" evidence="14">
    <location>
        <begin position="81"/>
        <end position="83"/>
    </location>
</feature>
<feature type="strand" evidence="14">
    <location>
        <begin position="86"/>
        <end position="98"/>
    </location>
</feature>
<feature type="helix" evidence="14">
    <location>
        <begin position="99"/>
        <end position="115"/>
    </location>
</feature>
<feature type="strand" evidence="14">
    <location>
        <begin position="117"/>
        <end position="119"/>
    </location>
</feature>
<feature type="strand" evidence="14">
    <location>
        <begin position="126"/>
        <end position="130"/>
    </location>
</feature>
<feature type="helix" evidence="14">
    <location>
        <begin position="135"/>
        <end position="147"/>
    </location>
</feature>
<feature type="strand" evidence="14">
    <location>
        <begin position="150"/>
        <end position="154"/>
    </location>
</feature>
<feature type="helix" evidence="14">
    <location>
        <begin position="160"/>
        <end position="170"/>
    </location>
</feature>
<feature type="strand" evidence="14">
    <location>
        <begin position="173"/>
        <end position="178"/>
    </location>
</feature>
<feature type="helix" evidence="14">
    <location>
        <begin position="179"/>
        <end position="181"/>
    </location>
</feature>
<feature type="helix" evidence="14">
    <location>
        <begin position="182"/>
        <end position="190"/>
    </location>
</feature>
<feature type="strand" evidence="14">
    <location>
        <begin position="197"/>
        <end position="202"/>
    </location>
</feature>
<feature type="helix" evidence="14">
    <location>
        <begin position="208"/>
        <end position="223"/>
    </location>
</feature>
<feature type="strand" evidence="14">
    <location>
        <begin position="229"/>
        <end position="232"/>
    </location>
</feature>
<feature type="helix" evidence="14">
    <location>
        <begin position="233"/>
        <end position="241"/>
    </location>
</feature>
<feature type="helix" evidence="14">
    <location>
        <begin position="255"/>
        <end position="257"/>
    </location>
</feature>
<feature type="strand" evidence="14">
    <location>
        <begin position="258"/>
        <end position="265"/>
    </location>
</feature>
<feature type="turn" evidence="13">
    <location>
        <begin position="267"/>
        <end position="269"/>
    </location>
</feature>
<feature type="strand" evidence="14">
    <location>
        <begin position="273"/>
        <end position="278"/>
    </location>
</feature>
<feature type="helix" evidence="14">
    <location>
        <begin position="279"/>
        <end position="282"/>
    </location>
</feature>
<feature type="helix" evidence="14">
    <location>
        <begin position="283"/>
        <end position="285"/>
    </location>
</feature>
<feature type="helix" evidence="14">
    <location>
        <begin position="289"/>
        <end position="292"/>
    </location>
</feature>
<feature type="strand" evidence="14">
    <location>
        <begin position="293"/>
        <end position="295"/>
    </location>
</feature>
<feature type="strand" evidence="14">
    <location>
        <begin position="298"/>
        <end position="300"/>
    </location>
</feature>
<feature type="strand" evidence="14">
    <location>
        <begin position="306"/>
        <end position="309"/>
    </location>
</feature>
<feature type="helix" evidence="14">
    <location>
        <begin position="316"/>
        <end position="326"/>
    </location>
</feature>
<feature type="turn" evidence="14">
    <location>
        <begin position="327"/>
        <end position="329"/>
    </location>
</feature>
<feature type="strand" evidence="14">
    <location>
        <begin position="331"/>
        <end position="334"/>
    </location>
</feature>
<feature type="helix" evidence="14">
    <location>
        <begin position="343"/>
        <end position="350"/>
    </location>
</feature>
<feature type="strand" evidence="14">
    <location>
        <begin position="353"/>
        <end position="357"/>
    </location>
</feature>
<feature type="helix" evidence="14">
    <location>
        <begin position="359"/>
        <end position="376"/>
    </location>
</feature>
<feature type="helix" evidence="14">
    <location>
        <begin position="383"/>
        <end position="394"/>
    </location>
</feature>
<feature type="turn" evidence="16">
    <location>
        <begin position="395"/>
        <end position="397"/>
    </location>
</feature>
<feature type="strand" evidence="14">
    <location>
        <begin position="403"/>
        <end position="409"/>
    </location>
</feature>
<feature type="helix" evidence="14">
    <location>
        <begin position="413"/>
        <end position="423"/>
    </location>
</feature>
<feature type="strand" evidence="14">
    <location>
        <begin position="427"/>
        <end position="433"/>
    </location>
</feature>
<feature type="turn" evidence="14">
    <location>
        <begin position="434"/>
        <end position="436"/>
    </location>
</feature>
<feature type="strand" evidence="14">
    <location>
        <begin position="437"/>
        <end position="441"/>
    </location>
</feature>
<feature type="turn" evidence="14">
    <location>
        <begin position="447"/>
        <end position="449"/>
    </location>
</feature>
<feature type="strand" evidence="14">
    <location>
        <begin position="450"/>
        <end position="456"/>
    </location>
</feature>
<feature type="helix" evidence="14">
    <location>
        <begin position="459"/>
        <end position="461"/>
    </location>
</feature>
<feature type="strand" evidence="14">
    <location>
        <begin position="468"/>
        <end position="470"/>
    </location>
</feature>
<feature type="strand" evidence="14">
    <location>
        <begin position="472"/>
        <end position="479"/>
    </location>
</feature>
<feature type="helix" evidence="14">
    <location>
        <begin position="490"/>
        <end position="495"/>
    </location>
</feature>
<feature type="strand" evidence="14">
    <location>
        <begin position="503"/>
        <end position="513"/>
    </location>
</feature>
<feature type="strand" evidence="14">
    <location>
        <begin position="516"/>
        <end position="522"/>
    </location>
</feature>
<feature type="helix" evidence="14">
    <location>
        <begin position="523"/>
        <end position="525"/>
    </location>
</feature>
<feature type="strand" evidence="14">
    <location>
        <begin position="526"/>
        <end position="528"/>
    </location>
</feature>
<feature type="strand" evidence="14">
    <location>
        <begin position="534"/>
        <end position="536"/>
    </location>
</feature>
<feature type="helix" evidence="14">
    <location>
        <begin position="537"/>
        <end position="544"/>
    </location>
</feature>
<feature type="strand" evidence="14">
    <location>
        <begin position="550"/>
        <end position="556"/>
    </location>
</feature>
<feature type="strand" evidence="13">
    <location>
        <begin position="561"/>
        <end position="563"/>
    </location>
</feature>
<feature type="strand" evidence="14">
    <location>
        <begin position="565"/>
        <end position="570"/>
    </location>
</feature>
<feature type="helix" evidence="14">
    <location>
        <begin position="572"/>
        <end position="578"/>
    </location>
</feature>
<feature type="helix" evidence="14">
    <location>
        <begin position="582"/>
        <end position="598"/>
    </location>
</feature>
<feature type="helix" evidence="14">
    <location>
        <begin position="603"/>
        <end position="605"/>
    </location>
</feature>
<feature type="strand" evidence="14">
    <location>
        <begin position="609"/>
        <end position="612"/>
    </location>
</feature>
<feature type="turn" evidence="14">
    <location>
        <begin position="619"/>
        <end position="622"/>
    </location>
</feature>
<feature type="helix" evidence="14">
    <location>
        <begin position="632"/>
        <end position="650"/>
    </location>
</feature>
<feature type="helix" evidence="13">
    <location>
        <begin position="656"/>
        <end position="661"/>
    </location>
</feature>
<feature type="strand" evidence="13">
    <location>
        <begin position="666"/>
        <end position="668"/>
    </location>
</feature>
<feature type="helix" evidence="13">
    <location>
        <begin position="670"/>
        <end position="681"/>
    </location>
</feature>
<feature type="helix" evidence="16">
    <location>
        <begin position="686"/>
        <end position="688"/>
    </location>
</feature>
<feature type="turn" evidence="13">
    <location>
        <begin position="695"/>
        <end position="698"/>
    </location>
</feature>
<feature type="helix" evidence="13">
    <location>
        <begin position="702"/>
        <end position="716"/>
    </location>
</feature>
<feature type="helix" evidence="13">
    <location>
        <begin position="722"/>
        <end position="726"/>
    </location>
</feature>
<feature type="helix" evidence="13">
    <location>
        <begin position="732"/>
        <end position="743"/>
    </location>
</feature>
<feature type="helix" evidence="15">
    <location>
        <begin position="752"/>
        <end position="756"/>
    </location>
</feature>
<feature type="strand" evidence="15">
    <location>
        <begin position="761"/>
        <end position="764"/>
    </location>
</feature>
<feature type="helix" evidence="15">
    <location>
        <begin position="765"/>
        <end position="767"/>
    </location>
</feature>
<feature type="helix" evidence="15">
    <location>
        <begin position="770"/>
        <end position="772"/>
    </location>
</feature>
<feature type="helix" evidence="15">
    <location>
        <begin position="776"/>
        <end position="781"/>
    </location>
</feature>
<feature type="helix" evidence="15">
    <location>
        <begin position="782"/>
        <end position="784"/>
    </location>
</feature>
<feature type="strand" evidence="15">
    <location>
        <begin position="794"/>
        <end position="798"/>
    </location>
</feature>
<feature type="helix" evidence="15">
    <location>
        <begin position="803"/>
        <end position="816"/>
    </location>
</feature>
<feature type="helix" evidence="15">
    <location>
        <begin position="817"/>
        <end position="819"/>
    </location>
</feature>
<feature type="strand" evidence="15">
    <location>
        <begin position="822"/>
        <end position="827"/>
    </location>
</feature>
<feature type="strand" evidence="15">
    <location>
        <begin position="829"/>
        <end position="831"/>
    </location>
</feature>
<feature type="helix" evidence="15">
    <location>
        <begin position="832"/>
        <end position="842"/>
    </location>
</feature>
<feature type="helix" evidence="15">
    <location>
        <begin position="848"/>
        <end position="861"/>
    </location>
</feature>
<feature type="strand" evidence="15">
    <location>
        <begin position="862"/>
        <end position="866"/>
    </location>
</feature>
<feature type="helix" evidence="15">
    <location>
        <begin position="872"/>
        <end position="875"/>
    </location>
</feature>
<feature type="helix" evidence="15">
    <location>
        <begin position="878"/>
        <end position="887"/>
    </location>
</feature>
<feature type="strand" evidence="15">
    <location>
        <begin position="890"/>
        <end position="893"/>
    </location>
</feature>
<feature type="strand" evidence="15">
    <location>
        <begin position="900"/>
        <end position="902"/>
    </location>
</feature>
<feature type="helix" evidence="15">
    <location>
        <begin position="904"/>
        <end position="911"/>
    </location>
</feature>
<feature type="helix" evidence="15">
    <location>
        <begin position="913"/>
        <end position="922"/>
    </location>
</feature>
<feature type="strand" evidence="15">
    <location>
        <begin position="924"/>
        <end position="926"/>
    </location>
</feature>
<feature type="strand" evidence="15">
    <location>
        <begin position="930"/>
        <end position="935"/>
    </location>
</feature>
<feature type="helix" evidence="15">
    <location>
        <begin position="936"/>
        <end position="939"/>
    </location>
</feature>
<feature type="helix" evidence="15">
    <location>
        <begin position="944"/>
        <end position="946"/>
    </location>
</feature>
<feature type="helix" evidence="15">
    <location>
        <begin position="953"/>
        <end position="956"/>
    </location>
</feature>
<feature type="strand" evidence="15">
    <location>
        <begin position="958"/>
        <end position="961"/>
    </location>
</feature>
<feature type="helix" evidence="15">
    <location>
        <begin position="968"/>
        <end position="988"/>
    </location>
</feature>
<feature type="strand" evidence="15">
    <location>
        <begin position="992"/>
        <end position="997"/>
    </location>
</feature>
<feature type="strand" evidence="15">
    <location>
        <begin position="999"/>
        <end position="1001"/>
    </location>
</feature>
<feature type="strand" evidence="15">
    <location>
        <begin position="1004"/>
        <end position="1006"/>
    </location>
</feature>
<feature type="helix" evidence="15">
    <location>
        <begin position="1015"/>
        <end position="1026"/>
    </location>
</feature>
<feature type="strand" evidence="15">
    <location>
        <begin position="1028"/>
        <end position="1031"/>
    </location>
</feature>
<feature type="strand" evidence="15">
    <location>
        <begin position="1049"/>
        <end position="1051"/>
    </location>
</feature>
<feature type="helix" evidence="15">
    <location>
        <begin position="1052"/>
        <end position="1064"/>
    </location>
</feature>
<feature type="strand" evidence="15">
    <location>
        <begin position="1067"/>
        <end position="1075"/>
    </location>
</feature>
<feature type="helix" evidence="15">
    <location>
        <begin position="1085"/>
        <end position="1094"/>
    </location>
</feature>
<feature type="strand" evidence="15">
    <location>
        <begin position="1100"/>
        <end position="1104"/>
    </location>
</feature>
<feature type="helix" evidence="15">
    <location>
        <begin position="1105"/>
        <end position="1117"/>
    </location>
</feature>
<feature type="helix" evidence="15">
    <location>
        <begin position="1121"/>
        <end position="1126"/>
    </location>
</feature>
<feature type="helix" evidence="15">
    <location>
        <begin position="1129"/>
        <end position="1135"/>
    </location>
</feature>
<feature type="helix" evidence="15">
    <location>
        <begin position="1150"/>
        <end position="1159"/>
    </location>
</feature>
<feature type="turn" evidence="15">
    <location>
        <begin position="1162"/>
        <end position="1165"/>
    </location>
</feature>
<feature type="helix" evidence="15">
    <location>
        <begin position="1172"/>
        <end position="1184"/>
    </location>
</feature>
<accession>E5XP76</accession>
<gene>
    <name evidence="2" type="primary">car</name>
    <name evidence="6" type="ORF">HMPREF9336_01297</name>
</gene>
<organism>
    <name type="scientific">Segniliparus rugosus (strain ATCC BAA-974 / DSM 45345 / CCUG 50838 / CIP 108380 / JCM 13579 / CDC 945)</name>
    <dbReference type="NCBI Taxonomy" id="679197"/>
    <lineage>
        <taxon>Bacteria</taxon>
        <taxon>Bacillati</taxon>
        <taxon>Actinomycetota</taxon>
        <taxon>Actinomycetes</taxon>
        <taxon>Mycobacteriales</taxon>
        <taxon>Segniliparaceae</taxon>
        <taxon>Segniliparus</taxon>
    </lineage>
</organism>
<evidence type="ECO:0000250" key="1">
    <source>
        <dbReference type="UniProtKB" id="Q6RKB1"/>
    </source>
</evidence>
<evidence type="ECO:0000255" key="2">
    <source>
        <dbReference type="HAMAP-Rule" id="MF_02247"/>
    </source>
</evidence>
<evidence type="ECO:0000269" key="3">
    <source>
    </source>
</evidence>
<evidence type="ECO:0000303" key="4">
    <source>
    </source>
</evidence>
<evidence type="ECO:0000305" key="5"/>
<evidence type="ECO:0000312" key="6">
    <source>
        <dbReference type="EMBL" id="EFV13858.1"/>
    </source>
</evidence>
<evidence type="ECO:0007744" key="7">
    <source>
        <dbReference type="PDB" id="5MSP"/>
    </source>
</evidence>
<evidence type="ECO:0007744" key="8">
    <source>
        <dbReference type="PDB" id="5MSR"/>
    </source>
</evidence>
<evidence type="ECO:0007744" key="9">
    <source>
        <dbReference type="PDB" id="5MSS"/>
    </source>
</evidence>
<evidence type="ECO:0007744" key="10">
    <source>
        <dbReference type="PDB" id="5MST"/>
    </source>
</evidence>
<evidence type="ECO:0007744" key="11">
    <source>
        <dbReference type="PDB" id="5MSV"/>
    </source>
</evidence>
<evidence type="ECO:0007744" key="12">
    <source>
        <dbReference type="PDB" id="5MSW"/>
    </source>
</evidence>
<evidence type="ECO:0007829" key="13">
    <source>
        <dbReference type="PDB" id="5MSS"/>
    </source>
</evidence>
<evidence type="ECO:0007829" key="14">
    <source>
        <dbReference type="PDB" id="5MST"/>
    </source>
</evidence>
<evidence type="ECO:0007829" key="15">
    <source>
        <dbReference type="PDB" id="5MSV"/>
    </source>
</evidence>
<evidence type="ECO:0007829" key="16">
    <source>
        <dbReference type="PDB" id="5MSW"/>
    </source>
</evidence>
<sequence>MTESQSYETRQARPAGQSLAERVARLVAIDPQAAAAVPDKAVAERATQQGLRLAQRIEAFLSGYGDRPALAQRAFEITKDPITGRAVATLLPKFETVSYRELLERSHAIASELANHAEAPVKAGEFIATIGFTSTDYTSLDIAGVLLGLTSVPLQTGATTDTLKAIAEETAPAVFGASVEHLDNAVTTALATPSVRRLLVFDYRQGVDEDREAVEAARSRLAEAGSAVLVDTLDEVIARGRALPRVALPPATDAGDDSLSLLIYTSGSTGTPKGAMYPERNVAQFWGGIWHNAFDDGDSAPDVPDIMVNFMPLSHVAGRIGLMGTLSSGGTTYFIAKSDLSTFFEDYSLARPTKLFFVPRICEMIYQHYQSELDRIGAADGSPQAEAIKTELREKLLGGRVLTAGSGSAPMSPELTAFIESVLQVHLVDGYGSTEAGPVWRDRKLVKPPVTEHKLIDVPELGYFSTDSPYPRGELAIKTQTILPGYYKRPETTAEVFDEDGFYLTGDVVAEVAPEEFVYVDRRKNVLKLSQGEFVALSKLEAAYGTSPLVRQISVYGSSQRSYLLAVVVPTPEALAKYGDGEAVKSALGDSLQKIAREEGLQSYEVPRDFIIETDPFTIENGILSDAGKTLRPKVKARYGERLEALYAQLAETQAGELRSIRVGAGERPVIETVQRAAAALLGASAAEVDPEAHFSDLGGDSLSALTYSNFLHEIFQVEVPVSVIVSAANNLRSVAAHIEKERSSGSDRPTFASVHGAGATTIRASDLKLEKFLDAQTLAAAPSLPRPASEVRTVLLTGSNGWLGRFLALAWLERLVPQGGKVVVIVRGKDDKAAKARLDSVFESGDPALLAHYEDLADKGLEVLAGDFSDADLGLRKADWDRLADEVDLIVHSGALVNHVLPYSQLFGPNVVGTAEVAKLALTKRLKPVTYLSTVAVAVGVEPSAFEEDGDIRDVSAVRSIDEGYANGYGNSKWAGEVLLREAYEHAGLPVRVFRSDMILAHRKYTGQLNVPDQFTRLILSLLATGIAPKSFYQLDATGGRQRAHYDGIPVDFTAEAITTLGLAGSDGYHSFDVFNPHHDGVGLDEFVDWLVEAGHPISRVDDYAEWLSRFETSLRGLPEAQRQHSVLPLLHAFAQPAPAIDGSPFQTKNFQSSVQEAKVGAEHDIPHLDKALIVKYAEDIKQLGLL</sequence>
<comment type="function">
    <text evidence="3">Catalyzes the ATP- and NADPH-dependent reduction of carboxylic acids to the corresponding aldehydes (PubMed:28719588). Catalyzes the reduction of a very wide range of carboxylic acids, including benzoic acids, heterocyclic, phenylacetic, phenylpropanoic and fatty acid substrates (PubMed:28719588).</text>
</comment>
<comment type="catalytic activity">
    <reaction evidence="2 3">
        <text>a carboxylate + ATP + NADPH + H(+) = an aldehyde + AMP + diphosphate + NADP(+)</text>
        <dbReference type="Rhea" id="RHEA:50916"/>
        <dbReference type="ChEBI" id="CHEBI:15378"/>
        <dbReference type="ChEBI" id="CHEBI:17478"/>
        <dbReference type="ChEBI" id="CHEBI:29067"/>
        <dbReference type="ChEBI" id="CHEBI:30616"/>
        <dbReference type="ChEBI" id="CHEBI:33019"/>
        <dbReference type="ChEBI" id="CHEBI:57783"/>
        <dbReference type="ChEBI" id="CHEBI:58349"/>
        <dbReference type="ChEBI" id="CHEBI:456215"/>
    </reaction>
</comment>
<comment type="cofactor">
    <cofactor evidence="2 3">
        <name>pantetheine 4'-phosphate</name>
        <dbReference type="ChEBI" id="CHEBI:47942"/>
    </cofactor>
    <text evidence="2 3">Binds 1 phosphopantetheine covalently.</text>
</comment>
<comment type="domain">
    <text evidence="1 3">The N-terminal domain likely catalyzes substrate activation by formation of an initial acyl-AMP intermediate, the central region contains the phosphopantetheine attachment site, and the C-terminal domain catalyzes the reduction by NADPH of the intermediate thioester formed from the attack of the phosphopantetheine thiol at the carbonyl carbon of acyl-AMP (By similarity). Large-scale domain motions occur between the adenylation and thiolation states. Phosphopantetheine binding alters the orientation of a key Asp, resulting in a productive orientation of the bound nicotinamide. This ensures that further reduction of the aldehyde product does not occur (PubMed:28719588).</text>
</comment>
<comment type="similarity">
    <text evidence="2 5">Belongs to the ATP-dependent AMP-binding enzyme family. Carboxylic acid reductase subfamily.</text>
</comment>
<proteinExistence type="evidence at protein level"/>
<dbReference type="EC" id="1.2.1.-" evidence="2 3"/>
<dbReference type="EMBL" id="ACZI02000003">
    <property type="protein sequence ID" value="EFV13858.1"/>
    <property type="molecule type" value="Genomic_DNA"/>
</dbReference>
<dbReference type="RefSeq" id="WP_007468889.1">
    <property type="nucleotide sequence ID" value="NZ_KI391954.1"/>
</dbReference>
<dbReference type="PDB" id="5MSP">
    <property type="method" value="X-ray"/>
    <property type="resolution" value="2.41 A"/>
    <property type="chains" value="A=1-1188"/>
</dbReference>
<dbReference type="PDB" id="5MSR">
    <property type="method" value="X-ray"/>
    <property type="resolution" value="2.37 A"/>
    <property type="chains" value="A/B/C/D=1-1188"/>
</dbReference>
<dbReference type="PDB" id="5MSS">
    <property type="method" value="X-ray"/>
    <property type="resolution" value="1.96 A"/>
    <property type="chains" value="A=1-1188"/>
</dbReference>
<dbReference type="PDB" id="5MST">
    <property type="method" value="X-ray"/>
    <property type="resolution" value="1.72 A"/>
    <property type="chains" value="A/B=1-1188"/>
</dbReference>
<dbReference type="PDB" id="5MSV">
    <property type="method" value="X-ray"/>
    <property type="resolution" value="2.34 A"/>
    <property type="chains" value="A/B/C/D=1-1188"/>
</dbReference>
<dbReference type="PDB" id="5MSW">
    <property type="method" value="X-ray"/>
    <property type="resolution" value="2.33 A"/>
    <property type="chains" value="A=1-1188"/>
</dbReference>
<dbReference type="PDBsum" id="5MSP"/>
<dbReference type="PDBsum" id="5MSR"/>
<dbReference type="PDBsum" id="5MSS"/>
<dbReference type="PDBsum" id="5MST"/>
<dbReference type="PDBsum" id="5MSV"/>
<dbReference type="PDBsum" id="5MSW"/>
<dbReference type="SMR" id="E5XP76"/>
<dbReference type="STRING" id="679197.HMPREF9336_01297"/>
<dbReference type="eggNOG" id="COG0236">
    <property type="taxonomic scope" value="Bacteria"/>
</dbReference>
<dbReference type="eggNOG" id="COG1022">
    <property type="taxonomic scope" value="Bacteria"/>
</dbReference>
<dbReference type="eggNOG" id="COG3320">
    <property type="taxonomic scope" value="Bacteria"/>
</dbReference>
<dbReference type="HOGENOM" id="CLU_009549_0_0_11"/>
<dbReference type="OrthoDB" id="2472181at2"/>
<dbReference type="Proteomes" id="UP000004816">
    <property type="component" value="Unassembled WGS sequence"/>
</dbReference>
<dbReference type="GO" id="GO:0016020">
    <property type="term" value="C:membrane"/>
    <property type="evidence" value="ECO:0007669"/>
    <property type="project" value="TreeGrafter"/>
</dbReference>
<dbReference type="GO" id="GO:0005524">
    <property type="term" value="F:ATP binding"/>
    <property type="evidence" value="ECO:0007669"/>
    <property type="project" value="UniProtKB-UniRule"/>
</dbReference>
<dbReference type="GO" id="GO:0004467">
    <property type="term" value="F:long-chain fatty acid-CoA ligase activity"/>
    <property type="evidence" value="ECO:0007669"/>
    <property type="project" value="TreeGrafter"/>
</dbReference>
<dbReference type="GO" id="GO:0050661">
    <property type="term" value="F:NADP binding"/>
    <property type="evidence" value="ECO:0007669"/>
    <property type="project" value="UniProtKB-UniRule"/>
</dbReference>
<dbReference type="GO" id="GO:0016620">
    <property type="term" value="F:oxidoreductase activity, acting on the aldehyde or oxo group of donors, NAD or NADP as acceptor"/>
    <property type="evidence" value="ECO:0007669"/>
    <property type="project" value="UniProtKB-UniRule"/>
</dbReference>
<dbReference type="GO" id="GO:0031177">
    <property type="term" value="F:phosphopantetheine binding"/>
    <property type="evidence" value="ECO:0007669"/>
    <property type="project" value="UniProtKB-UniRule"/>
</dbReference>
<dbReference type="GO" id="GO:0009058">
    <property type="term" value="P:biosynthetic process"/>
    <property type="evidence" value="ECO:0007669"/>
    <property type="project" value="UniProtKB-ARBA"/>
</dbReference>
<dbReference type="CDD" id="cd17632">
    <property type="entry name" value="AFD_CAR-like"/>
    <property type="match status" value="1"/>
</dbReference>
<dbReference type="CDD" id="cd05235">
    <property type="entry name" value="SDR_e1"/>
    <property type="match status" value="1"/>
</dbReference>
<dbReference type="Gene3D" id="1.10.1200.10">
    <property type="entry name" value="ACP-like"/>
    <property type="match status" value="1"/>
</dbReference>
<dbReference type="Gene3D" id="3.40.50.12780">
    <property type="entry name" value="N-terminal domain of ligase-like"/>
    <property type="match status" value="1"/>
</dbReference>
<dbReference type="Gene3D" id="3.40.50.720">
    <property type="entry name" value="NAD(P)-binding Rossmann-like Domain"/>
    <property type="match status" value="1"/>
</dbReference>
<dbReference type="HAMAP" id="MF_02247">
    <property type="entry name" value="Carbox_acid_reduct"/>
    <property type="match status" value="1"/>
</dbReference>
<dbReference type="InterPro" id="IPR036736">
    <property type="entry name" value="ACP-like_sf"/>
</dbReference>
<dbReference type="InterPro" id="IPR020845">
    <property type="entry name" value="AMP-binding_CS"/>
</dbReference>
<dbReference type="InterPro" id="IPR000873">
    <property type="entry name" value="AMP-dep_synth/lig_dom"/>
</dbReference>
<dbReference type="InterPro" id="IPR042099">
    <property type="entry name" value="ANL_N_sf"/>
</dbReference>
<dbReference type="InterPro" id="IPR046407">
    <property type="entry name" value="CAR"/>
</dbReference>
<dbReference type="InterPro" id="IPR013120">
    <property type="entry name" value="Far_NAD-bd"/>
</dbReference>
<dbReference type="InterPro" id="IPR036291">
    <property type="entry name" value="NAD(P)-bd_dom_sf"/>
</dbReference>
<dbReference type="InterPro" id="IPR020806">
    <property type="entry name" value="PKS_PP-bd"/>
</dbReference>
<dbReference type="InterPro" id="IPR009081">
    <property type="entry name" value="PP-bd_ACP"/>
</dbReference>
<dbReference type="InterPro" id="IPR010080">
    <property type="entry name" value="Thioester_reductase-like_dom"/>
</dbReference>
<dbReference type="NCBIfam" id="NF041592">
    <property type="entry name" value="carboxyl_red"/>
    <property type="match status" value="1"/>
</dbReference>
<dbReference type="NCBIfam" id="TIGR01746">
    <property type="entry name" value="Thioester-redct"/>
    <property type="match status" value="1"/>
</dbReference>
<dbReference type="PANTHER" id="PTHR43272:SF33">
    <property type="entry name" value="AMP-BINDING DOMAIN-CONTAINING PROTEIN-RELATED"/>
    <property type="match status" value="1"/>
</dbReference>
<dbReference type="PANTHER" id="PTHR43272">
    <property type="entry name" value="LONG-CHAIN-FATTY-ACID--COA LIGASE"/>
    <property type="match status" value="1"/>
</dbReference>
<dbReference type="Pfam" id="PF00501">
    <property type="entry name" value="AMP-binding"/>
    <property type="match status" value="1"/>
</dbReference>
<dbReference type="Pfam" id="PF07993">
    <property type="entry name" value="NAD_binding_4"/>
    <property type="match status" value="1"/>
</dbReference>
<dbReference type="Pfam" id="PF00550">
    <property type="entry name" value="PP-binding"/>
    <property type="match status" value="1"/>
</dbReference>
<dbReference type="SMART" id="SM00823">
    <property type="entry name" value="PKS_PP"/>
    <property type="match status" value="1"/>
</dbReference>
<dbReference type="SUPFAM" id="SSF56801">
    <property type="entry name" value="Acetyl-CoA synthetase-like"/>
    <property type="match status" value="1"/>
</dbReference>
<dbReference type="SUPFAM" id="SSF47336">
    <property type="entry name" value="ACP-like"/>
    <property type="match status" value="1"/>
</dbReference>
<dbReference type="SUPFAM" id="SSF51735">
    <property type="entry name" value="NAD(P)-binding Rossmann-fold domains"/>
    <property type="match status" value="1"/>
</dbReference>
<dbReference type="PROSITE" id="PS00455">
    <property type="entry name" value="AMP_BINDING"/>
    <property type="match status" value="1"/>
</dbReference>
<dbReference type="PROSITE" id="PS50075">
    <property type="entry name" value="CARRIER"/>
    <property type="match status" value="1"/>
</dbReference>
<protein>
    <recommendedName>
        <fullName evidence="2 4">Carboxylic acid reductase</fullName>
        <shortName evidence="2 4">CAR</shortName>
        <ecNumber evidence="2 3">1.2.1.-</ecNumber>
    </recommendedName>
    <alternativeName>
        <fullName evidence="2 5">ATP/NADPH-dependent carboxylic acid reductase</fullName>
    </alternativeName>
</protein>
<reference key="1">
    <citation type="journal article" date="2011" name="Stand. Genomic Sci.">
        <title>High quality draft genome sequence of Segniliparus rugosus CDC 945(T)= (ATCC BAA-974(T)).</title>
        <authorList>
            <person name="Earl A.M."/>
            <person name="Desjardins C.A."/>
            <person name="Fitzgerald M.G."/>
            <person name="Arachchi H.M."/>
            <person name="Zeng Q."/>
            <person name="Mehta T."/>
            <person name="Griggs A."/>
            <person name="Birren B.W."/>
            <person name="Toney N.C."/>
            <person name="Carr J."/>
            <person name="Posey J."/>
            <person name="Butler W.R."/>
        </authorList>
    </citation>
    <scope>NUCLEOTIDE SEQUENCE [LARGE SCALE GENOMIC DNA]</scope>
    <source>
        <strain>ATCC BAA-974 / DSM 45345 / CCUG 50838 / CIP 108380 / JCM 13579 / CDC 945</strain>
    </source>
</reference>
<reference evidence="7 8 9 10 11 12" key="2">
    <citation type="journal article" date="2017" name="Nat. Chem. Biol.">
        <title>Structures of carboxylic acid reductase reveal domain dynamics underlying catalysis.</title>
        <authorList>
            <person name="Gahloth D."/>
            <person name="Dunstan M.S."/>
            <person name="Quaglia D."/>
            <person name="Klumbys E."/>
            <person name="Lockhart-Cairns M.P."/>
            <person name="Hill A.M."/>
            <person name="Derrington S.R."/>
            <person name="Scrutton N.S."/>
            <person name="Turner N.J."/>
            <person name="Leys D."/>
        </authorList>
    </citation>
    <scope>X-RAY CRYSTALLOGRAPHY (1.72 ANGSTROMS) IN COMPLEXES WITH AMP; NADP AND PHOSPHOPANTETHEINE</scope>
    <scope>FUNCTION</scope>
    <scope>CATALYTIC ACTIVITY</scope>
    <scope>COFACTOR</scope>
    <scope>DOMAIN</scope>
    <scope>PHOSPHOPANTETHEINYLATION AT SER-702</scope>
    <scope>MUTAGENESIS OF HIS-900; TYR-966; ASP-998; GLN-1015; ARG-1018 AND LEU-1131</scope>
</reference>
<keyword id="KW-0002">3D-structure</keyword>
<keyword id="KW-0067">ATP-binding</keyword>
<keyword id="KW-0521">NADP</keyword>
<keyword id="KW-0547">Nucleotide-binding</keyword>
<keyword id="KW-0560">Oxidoreductase</keyword>
<keyword id="KW-0596">Phosphopantetheine</keyword>
<keyword id="KW-0597">Phosphoprotein</keyword>
<keyword id="KW-1185">Reference proteome</keyword>
<name>CAR_SEGRC</name>